<sequence length="425" mass="48787">MLDLKFIRDNLDLVKRSIKARGLVLDIDKLIYLDDKRKKLITKIGELNAKRNENSSKMQENLDKVLKISLIETGKILKKQLIDLEEELERVSVDFDLENKKVPNILSPDVPIGSSEEDNFEIKRVGVVPQFDFKPKDHLELGRDLDLLDFDRAREISGSKFYYLKNEAVFLEIALINFSLNKLRDKGFDVFITPDVAREFIVDGIGFNPRGNESNIYKIEDTDKYLVGTSEITLGGYYYNKIIDLTLPIRMAGFSHCFRKEAGAYGQLSKGLYRVHQFSKVEMFCFCKAEESGVIHDEFLSIQEQIFTELEIPYRVLNICSFDLGSPAYKKYDIEAWMPGRDGKGGYGEVTSTSNCTDYQSRRLKIRYKDQDGQNKFAHMVNGTAIATTRVIISILENFQDQKGGVRIPKSLVKYTGFDYIPFKN</sequence>
<keyword id="KW-0030">Aminoacyl-tRNA synthetase</keyword>
<keyword id="KW-0067">ATP-binding</keyword>
<keyword id="KW-0963">Cytoplasm</keyword>
<keyword id="KW-0436">Ligase</keyword>
<keyword id="KW-0547">Nucleotide-binding</keyword>
<keyword id="KW-0648">Protein biosynthesis</keyword>
<keyword id="KW-1185">Reference proteome</keyword>
<reference key="1">
    <citation type="journal article" date="1997" name="Nature">
        <title>Genomic sequence of a Lyme disease spirochaete, Borrelia burgdorferi.</title>
        <authorList>
            <person name="Fraser C.M."/>
            <person name="Casjens S."/>
            <person name="Huang W.M."/>
            <person name="Sutton G.G."/>
            <person name="Clayton R.A."/>
            <person name="Lathigra R."/>
            <person name="White O."/>
            <person name="Ketchum K.A."/>
            <person name="Dodson R.J."/>
            <person name="Hickey E.K."/>
            <person name="Gwinn M.L."/>
            <person name="Dougherty B.A."/>
            <person name="Tomb J.-F."/>
            <person name="Fleischmann R.D."/>
            <person name="Richardson D.L."/>
            <person name="Peterson J.D."/>
            <person name="Kerlavage A.R."/>
            <person name="Quackenbush J."/>
            <person name="Salzberg S.L."/>
            <person name="Hanson M."/>
            <person name="van Vugt R."/>
            <person name="Palmer N."/>
            <person name="Adams M.D."/>
            <person name="Gocayne J.D."/>
            <person name="Weidman J.F."/>
            <person name="Utterback T.R."/>
            <person name="Watthey L."/>
            <person name="McDonald L.A."/>
            <person name="Artiach P."/>
            <person name="Bowman C."/>
            <person name="Garland S.A."/>
            <person name="Fujii C."/>
            <person name="Cotton M.D."/>
            <person name="Horst K."/>
            <person name="Roberts K.M."/>
            <person name="Hatch B."/>
            <person name="Smith H.O."/>
            <person name="Venter J.C."/>
        </authorList>
    </citation>
    <scope>NUCLEOTIDE SEQUENCE [LARGE SCALE GENOMIC DNA]</scope>
    <source>
        <strain>ATCC 35210 / DSM 4680 / CIP 102532 / B31</strain>
    </source>
</reference>
<proteinExistence type="inferred from homology"/>
<dbReference type="EC" id="6.1.1.11" evidence="1"/>
<dbReference type="EMBL" id="AE000783">
    <property type="protein sequence ID" value="AAC66622.1"/>
    <property type="molecule type" value="Genomic_DNA"/>
</dbReference>
<dbReference type="PIR" id="B70128">
    <property type="entry name" value="B70128"/>
</dbReference>
<dbReference type="RefSeq" id="NP_212360.1">
    <property type="nucleotide sequence ID" value="NC_001318.1"/>
</dbReference>
<dbReference type="RefSeq" id="WP_002657654.1">
    <property type="nucleotide sequence ID" value="NC_001318.1"/>
</dbReference>
<dbReference type="SMR" id="O51244"/>
<dbReference type="STRING" id="224326.BB_0226"/>
<dbReference type="PaxDb" id="224326-BB_0226"/>
<dbReference type="EnsemblBacteria" id="AAC66622">
    <property type="protein sequence ID" value="AAC66622"/>
    <property type="gene ID" value="BB_0226"/>
</dbReference>
<dbReference type="GeneID" id="56567656"/>
<dbReference type="KEGG" id="bbu:BB_0226"/>
<dbReference type="PATRIC" id="fig|224326.49.peg.624"/>
<dbReference type="HOGENOM" id="CLU_023797_0_1_12"/>
<dbReference type="OrthoDB" id="9804647at2"/>
<dbReference type="UniPathway" id="UPA00906">
    <property type="reaction ID" value="UER00895"/>
</dbReference>
<dbReference type="Proteomes" id="UP000001807">
    <property type="component" value="Chromosome"/>
</dbReference>
<dbReference type="GO" id="GO:0005829">
    <property type="term" value="C:cytosol"/>
    <property type="evidence" value="ECO:0000314"/>
    <property type="project" value="CAFA"/>
</dbReference>
<dbReference type="GO" id="GO:0005524">
    <property type="term" value="F:ATP binding"/>
    <property type="evidence" value="ECO:0007669"/>
    <property type="project" value="UniProtKB-UniRule"/>
</dbReference>
<dbReference type="GO" id="GO:0004828">
    <property type="term" value="F:serine-tRNA ligase activity"/>
    <property type="evidence" value="ECO:0007669"/>
    <property type="project" value="UniProtKB-UniRule"/>
</dbReference>
<dbReference type="GO" id="GO:0016260">
    <property type="term" value="P:selenocysteine biosynthetic process"/>
    <property type="evidence" value="ECO:0007669"/>
    <property type="project" value="UniProtKB-UniRule"/>
</dbReference>
<dbReference type="GO" id="GO:0006434">
    <property type="term" value="P:seryl-tRNA aminoacylation"/>
    <property type="evidence" value="ECO:0007669"/>
    <property type="project" value="UniProtKB-UniRule"/>
</dbReference>
<dbReference type="CDD" id="cd00770">
    <property type="entry name" value="SerRS_core"/>
    <property type="match status" value="1"/>
</dbReference>
<dbReference type="FunFam" id="3.30.930.10:FF:000055">
    <property type="entry name" value="Serine--tRNA ligase"/>
    <property type="match status" value="1"/>
</dbReference>
<dbReference type="Gene3D" id="3.30.930.10">
    <property type="entry name" value="Bira Bifunctional Protein, Domain 2"/>
    <property type="match status" value="1"/>
</dbReference>
<dbReference type="Gene3D" id="1.10.287.40">
    <property type="entry name" value="Serine-tRNA synthetase, tRNA binding domain"/>
    <property type="match status" value="1"/>
</dbReference>
<dbReference type="HAMAP" id="MF_00176">
    <property type="entry name" value="Ser_tRNA_synth_type1"/>
    <property type="match status" value="1"/>
</dbReference>
<dbReference type="InterPro" id="IPR002314">
    <property type="entry name" value="aa-tRNA-synt_IIb"/>
</dbReference>
<dbReference type="InterPro" id="IPR006195">
    <property type="entry name" value="aa-tRNA-synth_II"/>
</dbReference>
<dbReference type="InterPro" id="IPR045864">
    <property type="entry name" value="aa-tRNA-synth_II/BPL/LPL"/>
</dbReference>
<dbReference type="InterPro" id="IPR002317">
    <property type="entry name" value="Ser-tRNA-ligase_type_1"/>
</dbReference>
<dbReference type="InterPro" id="IPR015866">
    <property type="entry name" value="Ser-tRNA-synth_1_N"/>
</dbReference>
<dbReference type="InterPro" id="IPR042103">
    <property type="entry name" value="SerRS_1_N_sf"/>
</dbReference>
<dbReference type="InterPro" id="IPR033729">
    <property type="entry name" value="SerRS_core"/>
</dbReference>
<dbReference type="InterPro" id="IPR010978">
    <property type="entry name" value="tRNA-bd_arm"/>
</dbReference>
<dbReference type="NCBIfam" id="TIGR00414">
    <property type="entry name" value="serS"/>
    <property type="match status" value="1"/>
</dbReference>
<dbReference type="PANTHER" id="PTHR11778">
    <property type="entry name" value="SERYL-TRNA SYNTHETASE"/>
    <property type="match status" value="1"/>
</dbReference>
<dbReference type="Pfam" id="PF02403">
    <property type="entry name" value="Seryl_tRNA_N"/>
    <property type="match status" value="1"/>
</dbReference>
<dbReference type="Pfam" id="PF00587">
    <property type="entry name" value="tRNA-synt_2b"/>
    <property type="match status" value="1"/>
</dbReference>
<dbReference type="PIRSF" id="PIRSF001529">
    <property type="entry name" value="Ser-tRNA-synth_IIa"/>
    <property type="match status" value="1"/>
</dbReference>
<dbReference type="PRINTS" id="PR00981">
    <property type="entry name" value="TRNASYNTHSER"/>
</dbReference>
<dbReference type="SUPFAM" id="SSF55681">
    <property type="entry name" value="Class II aaRS and biotin synthetases"/>
    <property type="match status" value="1"/>
</dbReference>
<dbReference type="SUPFAM" id="SSF46589">
    <property type="entry name" value="tRNA-binding arm"/>
    <property type="match status" value="1"/>
</dbReference>
<dbReference type="PROSITE" id="PS50862">
    <property type="entry name" value="AA_TRNA_LIGASE_II"/>
    <property type="match status" value="1"/>
</dbReference>
<feature type="chain" id="PRO_0000122011" description="Serine--tRNA ligase">
    <location>
        <begin position="1"/>
        <end position="425"/>
    </location>
</feature>
<feature type="binding site" evidence="1">
    <location>
        <begin position="229"/>
        <end position="231"/>
    </location>
    <ligand>
        <name>L-serine</name>
        <dbReference type="ChEBI" id="CHEBI:33384"/>
    </ligand>
</feature>
<feature type="binding site" evidence="1">
    <location>
        <begin position="259"/>
        <end position="261"/>
    </location>
    <ligand>
        <name>ATP</name>
        <dbReference type="ChEBI" id="CHEBI:30616"/>
    </ligand>
</feature>
<feature type="binding site" evidence="1">
    <location>
        <position position="275"/>
    </location>
    <ligand>
        <name>ATP</name>
        <dbReference type="ChEBI" id="CHEBI:30616"/>
    </ligand>
</feature>
<feature type="binding site" evidence="1">
    <location>
        <position position="282"/>
    </location>
    <ligand>
        <name>L-serine</name>
        <dbReference type="ChEBI" id="CHEBI:33384"/>
    </ligand>
</feature>
<feature type="binding site" evidence="1">
    <location>
        <begin position="349"/>
        <end position="352"/>
    </location>
    <ligand>
        <name>ATP</name>
        <dbReference type="ChEBI" id="CHEBI:30616"/>
    </ligand>
</feature>
<feature type="binding site" evidence="1">
    <location>
        <position position="384"/>
    </location>
    <ligand>
        <name>L-serine</name>
        <dbReference type="ChEBI" id="CHEBI:33384"/>
    </ligand>
</feature>
<name>SYS_BORBU</name>
<comment type="function">
    <text evidence="1">Catalyzes the attachment of serine to tRNA(Ser). Is also able to aminoacylate tRNA(Sec) with serine, to form the misacylated tRNA L-seryl-tRNA(Sec), which will be further converted into selenocysteinyl-tRNA(Sec).</text>
</comment>
<comment type="catalytic activity">
    <reaction evidence="1">
        <text>tRNA(Ser) + L-serine + ATP = L-seryl-tRNA(Ser) + AMP + diphosphate + H(+)</text>
        <dbReference type="Rhea" id="RHEA:12292"/>
        <dbReference type="Rhea" id="RHEA-COMP:9669"/>
        <dbReference type="Rhea" id="RHEA-COMP:9703"/>
        <dbReference type="ChEBI" id="CHEBI:15378"/>
        <dbReference type="ChEBI" id="CHEBI:30616"/>
        <dbReference type="ChEBI" id="CHEBI:33019"/>
        <dbReference type="ChEBI" id="CHEBI:33384"/>
        <dbReference type="ChEBI" id="CHEBI:78442"/>
        <dbReference type="ChEBI" id="CHEBI:78533"/>
        <dbReference type="ChEBI" id="CHEBI:456215"/>
        <dbReference type="EC" id="6.1.1.11"/>
    </reaction>
</comment>
<comment type="catalytic activity">
    <reaction evidence="1">
        <text>tRNA(Sec) + L-serine + ATP = L-seryl-tRNA(Sec) + AMP + diphosphate + H(+)</text>
        <dbReference type="Rhea" id="RHEA:42580"/>
        <dbReference type="Rhea" id="RHEA-COMP:9742"/>
        <dbReference type="Rhea" id="RHEA-COMP:10128"/>
        <dbReference type="ChEBI" id="CHEBI:15378"/>
        <dbReference type="ChEBI" id="CHEBI:30616"/>
        <dbReference type="ChEBI" id="CHEBI:33019"/>
        <dbReference type="ChEBI" id="CHEBI:33384"/>
        <dbReference type="ChEBI" id="CHEBI:78442"/>
        <dbReference type="ChEBI" id="CHEBI:78533"/>
        <dbReference type="ChEBI" id="CHEBI:456215"/>
        <dbReference type="EC" id="6.1.1.11"/>
    </reaction>
</comment>
<comment type="pathway">
    <text evidence="1">Aminoacyl-tRNA biosynthesis; selenocysteinyl-tRNA(Sec) biosynthesis; L-seryl-tRNA(Sec) from L-serine and tRNA(Sec): step 1/1.</text>
</comment>
<comment type="subunit">
    <text evidence="1">Homodimer. The tRNA molecule binds across the dimer.</text>
</comment>
<comment type="subcellular location">
    <subcellularLocation>
        <location evidence="1">Cytoplasm</location>
    </subcellularLocation>
</comment>
<comment type="domain">
    <text evidence="1">Consists of two distinct domains, a catalytic core and a N-terminal extension that is involved in tRNA binding.</text>
</comment>
<comment type="similarity">
    <text evidence="1">Belongs to the class-II aminoacyl-tRNA synthetase family. Type-1 seryl-tRNA synthetase subfamily.</text>
</comment>
<organism>
    <name type="scientific">Borreliella burgdorferi (strain ATCC 35210 / DSM 4680 / CIP 102532 / B31)</name>
    <name type="common">Borrelia burgdorferi</name>
    <dbReference type="NCBI Taxonomy" id="224326"/>
    <lineage>
        <taxon>Bacteria</taxon>
        <taxon>Pseudomonadati</taxon>
        <taxon>Spirochaetota</taxon>
        <taxon>Spirochaetia</taxon>
        <taxon>Spirochaetales</taxon>
        <taxon>Borreliaceae</taxon>
        <taxon>Borreliella</taxon>
    </lineage>
</organism>
<accession>O51244</accession>
<evidence type="ECO:0000255" key="1">
    <source>
        <dbReference type="HAMAP-Rule" id="MF_00176"/>
    </source>
</evidence>
<protein>
    <recommendedName>
        <fullName evidence="1">Serine--tRNA ligase</fullName>
        <ecNumber evidence="1">6.1.1.11</ecNumber>
    </recommendedName>
    <alternativeName>
        <fullName evidence="1">Seryl-tRNA synthetase</fullName>
        <shortName evidence="1">SerRS</shortName>
    </alternativeName>
    <alternativeName>
        <fullName evidence="1">Seryl-tRNA(Ser/Sec) synthetase</fullName>
    </alternativeName>
</protein>
<gene>
    <name evidence="1" type="primary">serS</name>
    <name type="ordered locus">BB_0226</name>
</gene>